<proteinExistence type="inferred from homology"/>
<reference key="1">
    <citation type="journal article" date="2007" name="Environ. Microbiol.">
        <title>Whole-genome analysis of the ammonia-oxidizing bacterium, Nitrosomonas eutropha C91: implications for niche adaptation.</title>
        <authorList>
            <person name="Stein L.Y."/>
            <person name="Arp D.J."/>
            <person name="Berube P.M."/>
            <person name="Chain P.S."/>
            <person name="Hauser L."/>
            <person name="Jetten M.S."/>
            <person name="Klotz M.G."/>
            <person name="Larimer F.W."/>
            <person name="Norton J.M."/>
            <person name="Op den Camp H.J.M."/>
            <person name="Shin M."/>
            <person name="Wei X."/>
        </authorList>
    </citation>
    <scope>NUCLEOTIDE SEQUENCE [LARGE SCALE GENOMIC DNA]</scope>
    <source>
        <strain>DSM 101675 / C91 / Nm57</strain>
    </source>
</reference>
<evidence type="ECO:0000255" key="1">
    <source>
        <dbReference type="HAMAP-Rule" id="MF_00532"/>
    </source>
</evidence>
<evidence type="ECO:0000305" key="2"/>
<organism>
    <name type="scientific">Nitrosomonas eutropha (strain DSM 101675 / C91 / Nm57)</name>
    <dbReference type="NCBI Taxonomy" id="335283"/>
    <lineage>
        <taxon>Bacteria</taxon>
        <taxon>Pseudomonadati</taxon>
        <taxon>Pseudomonadota</taxon>
        <taxon>Betaproteobacteria</taxon>
        <taxon>Nitrosomonadales</taxon>
        <taxon>Nitrosomonadaceae</taxon>
        <taxon>Nitrosomonas</taxon>
    </lineage>
</organism>
<dbReference type="EMBL" id="CP000450">
    <property type="protein sequence ID" value="ABI59033.1"/>
    <property type="molecule type" value="Genomic_DNA"/>
</dbReference>
<dbReference type="RefSeq" id="WP_011633858.1">
    <property type="nucleotide sequence ID" value="NC_008344.1"/>
</dbReference>
<dbReference type="SMR" id="Q0AHZ9"/>
<dbReference type="STRING" id="335283.Neut_0763"/>
<dbReference type="KEGG" id="net:Neut_0763"/>
<dbReference type="eggNOG" id="COG0103">
    <property type="taxonomic scope" value="Bacteria"/>
</dbReference>
<dbReference type="HOGENOM" id="CLU_046483_2_1_4"/>
<dbReference type="OrthoDB" id="9803965at2"/>
<dbReference type="Proteomes" id="UP000001966">
    <property type="component" value="Chromosome"/>
</dbReference>
<dbReference type="GO" id="GO:0022627">
    <property type="term" value="C:cytosolic small ribosomal subunit"/>
    <property type="evidence" value="ECO:0007669"/>
    <property type="project" value="TreeGrafter"/>
</dbReference>
<dbReference type="GO" id="GO:0003723">
    <property type="term" value="F:RNA binding"/>
    <property type="evidence" value="ECO:0007669"/>
    <property type="project" value="TreeGrafter"/>
</dbReference>
<dbReference type="GO" id="GO:0003735">
    <property type="term" value="F:structural constituent of ribosome"/>
    <property type="evidence" value="ECO:0007669"/>
    <property type="project" value="InterPro"/>
</dbReference>
<dbReference type="GO" id="GO:0006412">
    <property type="term" value="P:translation"/>
    <property type="evidence" value="ECO:0007669"/>
    <property type="project" value="UniProtKB-UniRule"/>
</dbReference>
<dbReference type="FunFam" id="3.30.230.10:FF:000001">
    <property type="entry name" value="30S ribosomal protein S9"/>
    <property type="match status" value="1"/>
</dbReference>
<dbReference type="Gene3D" id="3.30.230.10">
    <property type="match status" value="1"/>
</dbReference>
<dbReference type="HAMAP" id="MF_00532_B">
    <property type="entry name" value="Ribosomal_uS9_B"/>
    <property type="match status" value="1"/>
</dbReference>
<dbReference type="InterPro" id="IPR020568">
    <property type="entry name" value="Ribosomal_Su5_D2-typ_SF"/>
</dbReference>
<dbReference type="InterPro" id="IPR000754">
    <property type="entry name" value="Ribosomal_uS9"/>
</dbReference>
<dbReference type="InterPro" id="IPR023035">
    <property type="entry name" value="Ribosomal_uS9_bac/plastid"/>
</dbReference>
<dbReference type="InterPro" id="IPR020574">
    <property type="entry name" value="Ribosomal_uS9_CS"/>
</dbReference>
<dbReference type="InterPro" id="IPR014721">
    <property type="entry name" value="Ribsml_uS5_D2-typ_fold_subgr"/>
</dbReference>
<dbReference type="NCBIfam" id="NF001099">
    <property type="entry name" value="PRK00132.1"/>
    <property type="match status" value="1"/>
</dbReference>
<dbReference type="PANTHER" id="PTHR21569">
    <property type="entry name" value="RIBOSOMAL PROTEIN S9"/>
    <property type="match status" value="1"/>
</dbReference>
<dbReference type="PANTHER" id="PTHR21569:SF1">
    <property type="entry name" value="SMALL RIBOSOMAL SUBUNIT PROTEIN US9M"/>
    <property type="match status" value="1"/>
</dbReference>
<dbReference type="Pfam" id="PF00380">
    <property type="entry name" value="Ribosomal_S9"/>
    <property type="match status" value="1"/>
</dbReference>
<dbReference type="SUPFAM" id="SSF54211">
    <property type="entry name" value="Ribosomal protein S5 domain 2-like"/>
    <property type="match status" value="1"/>
</dbReference>
<dbReference type="PROSITE" id="PS00360">
    <property type="entry name" value="RIBOSOMAL_S9"/>
    <property type="match status" value="1"/>
</dbReference>
<keyword id="KW-0687">Ribonucleoprotein</keyword>
<keyword id="KW-0689">Ribosomal protein</keyword>
<gene>
    <name evidence="1" type="primary">rpsI</name>
    <name type="ordered locus">Neut_0763</name>
</gene>
<name>RS9_NITEC</name>
<sequence length="130" mass="14573">MAIQYNYGTGRRKSAVARVFIKSGTGVITVNHKPADEYFSRETGRMIIRQPLELTGNSTNLDIMVNIRGGGESGQAGAVRHGITRALIDYDETLKSVLSKAGFVTRDAREVERKKVGFRKARRRKQFSKR</sequence>
<accession>Q0AHZ9</accession>
<protein>
    <recommendedName>
        <fullName evidence="1">Small ribosomal subunit protein uS9</fullName>
    </recommendedName>
    <alternativeName>
        <fullName evidence="2">30S ribosomal protein S9</fullName>
    </alternativeName>
</protein>
<comment type="similarity">
    <text evidence="1">Belongs to the universal ribosomal protein uS9 family.</text>
</comment>
<feature type="chain" id="PRO_1000051267" description="Small ribosomal subunit protein uS9">
    <location>
        <begin position="1"/>
        <end position="130"/>
    </location>
</feature>